<accession>A5VSZ3</accession>
<name>AROB_BRUO2</name>
<keyword id="KW-0028">Amino-acid biosynthesis</keyword>
<keyword id="KW-0057">Aromatic amino acid biosynthesis</keyword>
<keyword id="KW-0170">Cobalt</keyword>
<keyword id="KW-0963">Cytoplasm</keyword>
<keyword id="KW-0456">Lyase</keyword>
<keyword id="KW-0479">Metal-binding</keyword>
<keyword id="KW-0520">NAD</keyword>
<keyword id="KW-0547">Nucleotide-binding</keyword>
<keyword id="KW-0862">Zinc</keyword>
<protein>
    <recommendedName>
        <fullName evidence="1">3-dehydroquinate synthase</fullName>
        <shortName evidence="1">DHQS</shortName>
        <ecNumber evidence="1">4.2.3.4</ecNumber>
    </recommendedName>
</protein>
<proteinExistence type="inferred from homology"/>
<gene>
    <name evidence="1" type="primary">aroB</name>
    <name type="ordered locus">BOV_1950</name>
</gene>
<feature type="chain" id="PRO_1000094465" description="3-dehydroquinate synthase">
    <location>
        <begin position="1"/>
        <end position="378"/>
    </location>
</feature>
<feature type="binding site" evidence="1">
    <location>
        <begin position="115"/>
        <end position="119"/>
    </location>
    <ligand>
        <name>NAD(+)</name>
        <dbReference type="ChEBI" id="CHEBI:57540"/>
    </ligand>
</feature>
<feature type="binding site" evidence="1">
    <location>
        <begin position="139"/>
        <end position="140"/>
    </location>
    <ligand>
        <name>NAD(+)</name>
        <dbReference type="ChEBI" id="CHEBI:57540"/>
    </ligand>
</feature>
<feature type="binding site" evidence="1">
    <location>
        <position position="152"/>
    </location>
    <ligand>
        <name>NAD(+)</name>
        <dbReference type="ChEBI" id="CHEBI:57540"/>
    </ligand>
</feature>
<feature type="binding site" evidence="1">
    <location>
        <position position="161"/>
    </location>
    <ligand>
        <name>NAD(+)</name>
        <dbReference type="ChEBI" id="CHEBI:57540"/>
    </ligand>
</feature>
<feature type="binding site" evidence="1">
    <location>
        <position position="194"/>
    </location>
    <ligand>
        <name>Zn(2+)</name>
        <dbReference type="ChEBI" id="CHEBI:29105"/>
    </ligand>
</feature>
<feature type="binding site" evidence="1">
    <location>
        <position position="256"/>
    </location>
    <ligand>
        <name>Zn(2+)</name>
        <dbReference type="ChEBI" id="CHEBI:29105"/>
    </ligand>
</feature>
<feature type="binding site" evidence="1">
    <location>
        <position position="275"/>
    </location>
    <ligand>
        <name>Zn(2+)</name>
        <dbReference type="ChEBI" id="CHEBI:29105"/>
    </ligand>
</feature>
<organism>
    <name type="scientific">Brucella ovis (strain ATCC 25840 / 63/290 / NCTC 10512)</name>
    <dbReference type="NCBI Taxonomy" id="444178"/>
    <lineage>
        <taxon>Bacteria</taxon>
        <taxon>Pseudomonadati</taxon>
        <taxon>Pseudomonadota</taxon>
        <taxon>Alphaproteobacteria</taxon>
        <taxon>Hyphomicrobiales</taxon>
        <taxon>Brucellaceae</taxon>
        <taxon>Brucella/Ochrobactrum group</taxon>
        <taxon>Brucella</taxon>
    </lineage>
</organism>
<comment type="function">
    <text evidence="1">Catalyzes the conversion of 3-deoxy-D-arabino-heptulosonate 7-phosphate (DAHP) to dehydroquinate (DHQ).</text>
</comment>
<comment type="catalytic activity">
    <reaction evidence="1">
        <text>7-phospho-2-dehydro-3-deoxy-D-arabino-heptonate = 3-dehydroquinate + phosphate</text>
        <dbReference type="Rhea" id="RHEA:21968"/>
        <dbReference type="ChEBI" id="CHEBI:32364"/>
        <dbReference type="ChEBI" id="CHEBI:43474"/>
        <dbReference type="ChEBI" id="CHEBI:58394"/>
        <dbReference type="EC" id="4.2.3.4"/>
    </reaction>
</comment>
<comment type="cofactor">
    <cofactor evidence="1">
        <name>Co(2+)</name>
        <dbReference type="ChEBI" id="CHEBI:48828"/>
    </cofactor>
    <cofactor evidence="1">
        <name>Zn(2+)</name>
        <dbReference type="ChEBI" id="CHEBI:29105"/>
    </cofactor>
    <text evidence="1">Binds 1 divalent metal cation per subunit. Can use either Co(2+) or Zn(2+).</text>
</comment>
<comment type="cofactor">
    <cofactor evidence="1">
        <name>NAD(+)</name>
        <dbReference type="ChEBI" id="CHEBI:57540"/>
    </cofactor>
</comment>
<comment type="pathway">
    <text evidence="1">Metabolic intermediate biosynthesis; chorismate biosynthesis; chorismate from D-erythrose 4-phosphate and phosphoenolpyruvate: step 2/7.</text>
</comment>
<comment type="subcellular location">
    <subcellularLocation>
        <location evidence="1">Cytoplasm</location>
    </subcellularLocation>
</comment>
<comment type="similarity">
    <text evidence="1">Belongs to the sugar phosphate cyclases superfamily. Dehydroquinate synthase family.</text>
</comment>
<reference key="1">
    <citation type="journal article" date="2009" name="PLoS ONE">
        <title>Genome degradation in Brucella ovis corresponds with narrowing of its host range and tissue tropism.</title>
        <authorList>
            <person name="Tsolis R.M."/>
            <person name="Seshadri R."/>
            <person name="Santos R.L."/>
            <person name="Sangari F.J."/>
            <person name="Lobo J.M."/>
            <person name="de Jong M.F."/>
            <person name="Ren Q."/>
            <person name="Myers G."/>
            <person name="Brinkac L.M."/>
            <person name="Nelson W.C."/>
            <person name="Deboy R.T."/>
            <person name="Angiuoli S."/>
            <person name="Khouri H."/>
            <person name="Dimitrov G."/>
            <person name="Robinson J.R."/>
            <person name="Mulligan S."/>
            <person name="Walker R.L."/>
            <person name="Elzer P.E."/>
            <person name="Hassan K.A."/>
            <person name="Paulsen I.T."/>
        </authorList>
    </citation>
    <scope>NUCLEOTIDE SEQUENCE [LARGE SCALE GENOMIC DNA]</scope>
    <source>
        <strain>ATCC 25840 / 63/290 / NCTC 10512</strain>
    </source>
</reference>
<evidence type="ECO:0000255" key="1">
    <source>
        <dbReference type="HAMAP-Rule" id="MF_00110"/>
    </source>
</evidence>
<sequence>MNAPTTVADSVTVPVSLGDRSYDILIGKGLVERAGEEVAKRLKGVRVAIVTDENVAAVHLERLQASFARAGIDSTPVIVAPGEKSKSFATLETVTNAILAAKLERGDAVVALGGGVVGDLSGFVAGIVRRGMNFVQMPTSLLAQVDSSVGGKTGINTAHGKNLVGVFNQPQLVLADTQVLDTLSPREFRAGYAEVAKYGLIDRPDFFAWLEANWQEVFSGGAARTKAIAESCRSKAAVVARDERETGDRALLNLGHTFGHALESATGYDSSRLVHGEGVAIGMALAYRFSARMNLAGIEAAERVEAHLKAVGLPVSLAEVPGGLPPAEKLMDYIAQDKKVTRGTLTFILTHGIGQSFIAKDVPPAAVLEFLKERLAIA</sequence>
<dbReference type="EC" id="4.2.3.4" evidence="1"/>
<dbReference type="EMBL" id="CP000708">
    <property type="protein sequence ID" value="ABQ60816.1"/>
    <property type="molecule type" value="Genomic_DNA"/>
</dbReference>
<dbReference type="RefSeq" id="WP_004684507.1">
    <property type="nucleotide sequence ID" value="NC_009505.1"/>
</dbReference>
<dbReference type="SMR" id="A5VSZ3"/>
<dbReference type="GeneID" id="97534707"/>
<dbReference type="KEGG" id="bov:BOV_1950"/>
<dbReference type="HOGENOM" id="CLU_001201_0_2_5"/>
<dbReference type="PhylomeDB" id="A5VSZ3"/>
<dbReference type="UniPathway" id="UPA00053">
    <property type="reaction ID" value="UER00085"/>
</dbReference>
<dbReference type="Proteomes" id="UP000006383">
    <property type="component" value="Chromosome I"/>
</dbReference>
<dbReference type="GO" id="GO:0005737">
    <property type="term" value="C:cytoplasm"/>
    <property type="evidence" value="ECO:0007669"/>
    <property type="project" value="UniProtKB-SubCell"/>
</dbReference>
<dbReference type="GO" id="GO:0003856">
    <property type="term" value="F:3-dehydroquinate synthase activity"/>
    <property type="evidence" value="ECO:0007669"/>
    <property type="project" value="UniProtKB-UniRule"/>
</dbReference>
<dbReference type="GO" id="GO:0046872">
    <property type="term" value="F:metal ion binding"/>
    <property type="evidence" value="ECO:0007669"/>
    <property type="project" value="UniProtKB-KW"/>
</dbReference>
<dbReference type="GO" id="GO:0000166">
    <property type="term" value="F:nucleotide binding"/>
    <property type="evidence" value="ECO:0007669"/>
    <property type="project" value="UniProtKB-KW"/>
</dbReference>
<dbReference type="GO" id="GO:0008652">
    <property type="term" value="P:amino acid biosynthetic process"/>
    <property type="evidence" value="ECO:0007669"/>
    <property type="project" value="UniProtKB-KW"/>
</dbReference>
<dbReference type="GO" id="GO:0009073">
    <property type="term" value="P:aromatic amino acid family biosynthetic process"/>
    <property type="evidence" value="ECO:0007669"/>
    <property type="project" value="UniProtKB-KW"/>
</dbReference>
<dbReference type="GO" id="GO:0009423">
    <property type="term" value="P:chorismate biosynthetic process"/>
    <property type="evidence" value="ECO:0007669"/>
    <property type="project" value="UniProtKB-UniRule"/>
</dbReference>
<dbReference type="CDD" id="cd08195">
    <property type="entry name" value="DHQS"/>
    <property type="match status" value="1"/>
</dbReference>
<dbReference type="FunFam" id="3.40.50.1970:FF:000007">
    <property type="entry name" value="Pentafunctional AROM polypeptide"/>
    <property type="match status" value="1"/>
</dbReference>
<dbReference type="Gene3D" id="3.40.50.1970">
    <property type="match status" value="1"/>
</dbReference>
<dbReference type="Gene3D" id="1.20.1090.10">
    <property type="entry name" value="Dehydroquinate synthase-like - alpha domain"/>
    <property type="match status" value="1"/>
</dbReference>
<dbReference type="HAMAP" id="MF_00110">
    <property type="entry name" value="DHQ_synthase"/>
    <property type="match status" value="1"/>
</dbReference>
<dbReference type="InterPro" id="IPR050071">
    <property type="entry name" value="Dehydroquinate_synthase"/>
</dbReference>
<dbReference type="InterPro" id="IPR016037">
    <property type="entry name" value="DHQ_synth_AroB"/>
</dbReference>
<dbReference type="InterPro" id="IPR030963">
    <property type="entry name" value="DHQ_synth_fam"/>
</dbReference>
<dbReference type="InterPro" id="IPR030960">
    <property type="entry name" value="DHQS/DOIS_N"/>
</dbReference>
<dbReference type="InterPro" id="IPR056179">
    <property type="entry name" value="DHQS_C"/>
</dbReference>
<dbReference type="NCBIfam" id="TIGR01357">
    <property type="entry name" value="aroB"/>
    <property type="match status" value="1"/>
</dbReference>
<dbReference type="PANTHER" id="PTHR43622">
    <property type="entry name" value="3-DEHYDROQUINATE SYNTHASE"/>
    <property type="match status" value="1"/>
</dbReference>
<dbReference type="PANTHER" id="PTHR43622:SF7">
    <property type="entry name" value="3-DEHYDROQUINATE SYNTHASE, CHLOROPLASTIC"/>
    <property type="match status" value="1"/>
</dbReference>
<dbReference type="Pfam" id="PF01761">
    <property type="entry name" value="DHQ_synthase"/>
    <property type="match status" value="1"/>
</dbReference>
<dbReference type="Pfam" id="PF24621">
    <property type="entry name" value="DHQS_C"/>
    <property type="match status" value="1"/>
</dbReference>
<dbReference type="PIRSF" id="PIRSF001455">
    <property type="entry name" value="DHQ_synth"/>
    <property type="match status" value="1"/>
</dbReference>
<dbReference type="SUPFAM" id="SSF56796">
    <property type="entry name" value="Dehydroquinate synthase-like"/>
    <property type="match status" value="1"/>
</dbReference>